<feature type="transit peptide" description="Mitochondrion" evidence="2">
    <location>
        <begin position="1"/>
        <end status="unknown"/>
    </location>
</feature>
<feature type="chain" id="PRO_0000020030" description="Probable NADH dehydrogenase [ubiquinone] iron-sulfur protein 7, mitochondrial">
    <location>
        <begin status="unknown"/>
        <end position="199"/>
    </location>
</feature>
<feature type="binding site" evidence="2">
    <location>
        <position position="74"/>
    </location>
    <ligand>
        <name>[4Fe-4S] cluster</name>
        <dbReference type="ChEBI" id="CHEBI:49883"/>
    </ligand>
</feature>
<feature type="binding site" evidence="2">
    <location>
        <position position="75"/>
    </location>
    <ligand>
        <name>[4Fe-4S] cluster</name>
        <dbReference type="ChEBI" id="CHEBI:49883"/>
    </ligand>
</feature>
<feature type="binding site" evidence="2">
    <location>
        <position position="139"/>
    </location>
    <ligand>
        <name>[4Fe-4S] cluster</name>
        <dbReference type="ChEBI" id="CHEBI:49883"/>
    </ligand>
</feature>
<feature type="binding site" evidence="2">
    <location>
        <position position="169"/>
    </location>
    <ligand>
        <name>[4Fe-4S] cluster</name>
        <dbReference type="ChEBI" id="CHEBI:49883"/>
    </ligand>
</feature>
<sequence length="199" mass="21912">MLSALRTAGAVGTRRLASTQAIASNSEAPKGIATTGTPFLNPSSKAEYALARLDDVLNLAQRGSIWPLTFGLACCAVEMMHFAAPRYDMDRYGVVFRASPRQADLIFVAGTVTNKMAPALRRIYDQMPEAKWVISMGSCANGGGYYHYAYSVLRGCDRVIPVDIYVPGCPPTAEALLYGVLQLQKKIKRKREAQLWYRR</sequence>
<dbReference type="EC" id="7.1.1.2"/>
<dbReference type="EMBL" id="Z79758">
    <property type="protein sequence ID" value="CAB02132.1"/>
    <property type="molecule type" value="Genomic_DNA"/>
</dbReference>
<dbReference type="PIR" id="T26329">
    <property type="entry name" value="T26329"/>
</dbReference>
<dbReference type="RefSeq" id="NP_492445.1">
    <property type="nucleotide sequence ID" value="NM_060044.7"/>
</dbReference>
<dbReference type="SMR" id="Q94360"/>
<dbReference type="BioGRID" id="38165">
    <property type="interactions" value="44"/>
</dbReference>
<dbReference type="FunCoup" id="Q94360">
    <property type="interactions" value="1102"/>
</dbReference>
<dbReference type="STRING" id="6239.W10D5.2.2"/>
<dbReference type="PaxDb" id="6239-W10D5.2.1"/>
<dbReference type="PeptideAtlas" id="Q94360"/>
<dbReference type="EnsemblMetazoa" id="W10D5.2.1">
    <property type="protein sequence ID" value="W10D5.2.1"/>
    <property type="gene ID" value="WBGene00012376"/>
</dbReference>
<dbReference type="EnsemblMetazoa" id="W10D5.2.2">
    <property type="protein sequence ID" value="W10D5.2.2"/>
    <property type="gene ID" value="WBGene00012376"/>
</dbReference>
<dbReference type="GeneID" id="172734"/>
<dbReference type="KEGG" id="cel:CELE_W10D5.2"/>
<dbReference type="AGR" id="WB:WBGene00012376"/>
<dbReference type="CTD" id="172734"/>
<dbReference type="WormBase" id="W10D5.2">
    <property type="protein sequence ID" value="CE14780"/>
    <property type="gene ID" value="WBGene00012376"/>
    <property type="gene designation" value="nduf-7"/>
</dbReference>
<dbReference type="eggNOG" id="KOG1687">
    <property type="taxonomic scope" value="Eukaryota"/>
</dbReference>
<dbReference type="GeneTree" id="ENSGT00390000006565"/>
<dbReference type="HOGENOM" id="CLU_055737_1_2_1"/>
<dbReference type="InParanoid" id="Q94360"/>
<dbReference type="OMA" id="CGGPYWE"/>
<dbReference type="OrthoDB" id="268400at2759"/>
<dbReference type="PhylomeDB" id="Q94360"/>
<dbReference type="Reactome" id="R-CEL-6799198">
    <property type="pathway name" value="Complex I biogenesis"/>
</dbReference>
<dbReference type="PRO" id="PR:Q94360"/>
<dbReference type="Proteomes" id="UP000001940">
    <property type="component" value="Chromosome I"/>
</dbReference>
<dbReference type="Bgee" id="WBGene00012376">
    <property type="expression patterns" value="Expressed in germ line (C elegans) and 4 other cell types or tissues"/>
</dbReference>
<dbReference type="GO" id="GO:0005739">
    <property type="term" value="C:mitochondrion"/>
    <property type="evidence" value="ECO:0007669"/>
    <property type="project" value="UniProtKB-SubCell"/>
</dbReference>
<dbReference type="GO" id="GO:0045271">
    <property type="term" value="C:respiratory chain complex I"/>
    <property type="evidence" value="ECO:0000250"/>
    <property type="project" value="WormBase"/>
</dbReference>
<dbReference type="GO" id="GO:0051539">
    <property type="term" value="F:4 iron, 4 sulfur cluster binding"/>
    <property type="evidence" value="ECO:0007669"/>
    <property type="project" value="UniProtKB-KW"/>
</dbReference>
<dbReference type="GO" id="GO:0046872">
    <property type="term" value="F:metal ion binding"/>
    <property type="evidence" value="ECO:0007669"/>
    <property type="project" value="UniProtKB-KW"/>
</dbReference>
<dbReference type="GO" id="GO:0008137">
    <property type="term" value="F:NADH dehydrogenase (ubiquinone) activity"/>
    <property type="evidence" value="ECO:0000318"/>
    <property type="project" value="GO_Central"/>
</dbReference>
<dbReference type="GO" id="GO:0048038">
    <property type="term" value="F:quinone binding"/>
    <property type="evidence" value="ECO:0007669"/>
    <property type="project" value="InterPro"/>
</dbReference>
<dbReference type="GO" id="GO:0009060">
    <property type="term" value="P:aerobic respiration"/>
    <property type="evidence" value="ECO:0000318"/>
    <property type="project" value="GO_Central"/>
</dbReference>
<dbReference type="GO" id="GO:0015990">
    <property type="term" value="P:electron transport coupled proton transport"/>
    <property type="evidence" value="ECO:0000318"/>
    <property type="project" value="GO_Central"/>
</dbReference>
<dbReference type="GO" id="GO:0006120">
    <property type="term" value="P:mitochondrial electron transport, NADH to ubiquinone"/>
    <property type="evidence" value="ECO:0000305"/>
    <property type="project" value="WormBase"/>
</dbReference>
<dbReference type="GO" id="GO:0032981">
    <property type="term" value="P:mitochondrial respiratory chain complex I assembly"/>
    <property type="evidence" value="ECO:0000318"/>
    <property type="project" value="GO_Central"/>
</dbReference>
<dbReference type="FunFam" id="3.40.50.12280:FF:000001">
    <property type="entry name" value="NADH-quinone oxidoreductase subunit B 2"/>
    <property type="match status" value="1"/>
</dbReference>
<dbReference type="Gene3D" id="3.40.50.12280">
    <property type="match status" value="1"/>
</dbReference>
<dbReference type="HAMAP" id="MF_01356">
    <property type="entry name" value="NDH1_NuoB"/>
    <property type="match status" value="1"/>
</dbReference>
<dbReference type="InterPro" id="IPR006137">
    <property type="entry name" value="NADH_UbQ_OxRdtase-like_20kDa"/>
</dbReference>
<dbReference type="InterPro" id="IPR006138">
    <property type="entry name" value="NADH_UQ_OxRdtase_20Kd_su"/>
</dbReference>
<dbReference type="NCBIfam" id="TIGR01957">
    <property type="entry name" value="nuoB_fam"/>
    <property type="match status" value="1"/>
</dbReference>
<dbReference type="NCBIfam" id="NF005012">
    <property type="entry name" value="PRK06411.1"/>
    <property type="match status" value="1"/>
</dbReference>
<dbReference type="PANTHER" id="PTHR11995">
    <property type="entry name" value="NADH DEHYDROGENASE"/>
    <property type="match status" value="1"/>
</dbReference>
<dbReference type="PANTHER" id="PTHR11995:SF14">
    <property type="entry name" value="NADH DEHYDROGENASE [UBIQUINONE] IRON-SULFUR PROTEIN 7, MITOCHONDRIAL"/>
    <property type="match status" value="1"/>
</dbReference>
<dbReference type="Pfam" id="PF01058">
    <property type="entry name" value="Oxidored_q6"/>
    <property type="match status" value="1"/>
</dbReference>
<dbReference type="SUPFAM" id="SSF56770">
    <property type="entry name" value="HydA/Nqo6-like"/>
    <property type="match status" value="1"/>
</dbReference>
<dbReference type="PROSITE" id="PS01150">
    <property type="entry name" value="COMPLEX1_20K"/>
    <property type="match status" value="1"/>
</dbReference>
<evidence type="ECO:0000250" key="1"/>
<evidence type="ECO:0000255" key="2"/>
<evidence type="ECO:0000305" key="3"/>
<proteinExistence type="inferred from homology"/>
<name>NDUS7_CAEEL</name>
<protein>
    <recommendedName>
        <fullName>Probable NADH dehydrogenase [ubiquinone] iron-sulfur protein 7, mitochondrial</fullName>
        <ecNumber>7.1.1.2</ecNumber>
    </recommendedName>
    <alternativeName>
        <fullName>Complex I-20kD</fullName>
        <shortName>CI-20kD</shortName>
    </alternativeName>
    <alternativeName>
        <fullName>NADH-ubiquinone oxidoreductase 20 kDa subunit</fullName>
    </alternativeName>
</protein>
<keyword id="KW-0004">4Fe-4S</keyword>
<keyword id="KW-0249">Electron transport</keyword>
<keyword id="KW-0408">Iron</keyword>
<keyword id="KW-0411">Iron-sulfur</keyword>
<keyword id="KW-0479">Metal-binding</keyword>
<keyword id="KW-0496">Mitochondrion</keyword>
<keyword id="KW-0520">NAD</keyword>
<keyword id="KW-0560">Oxidoreductase</keyword>
<keyword id="KW-1185">Reference proteome</keyword>
<keyword id="KW-0679">Respiratory chain</keyword>
<keyword id="KW-0809">Transit peptide</keyword>
<keyword id="KW-1278">Translocase</keyword>
<keyword id="KW-0813">Transport</keyword>
<keyword id="KW-0830">Ubiquinone</keyword>
<gene>
    <name type="primary">nduf-7</name>
    <name type="ORF">W10D5.2</name>
</gene>
<organism>
    <name type="scientific">Caenorhabditis elegans</name>
    <dbReference type="NCBI Taxonomy" id="6239"/>
    <lineage>
        <taxon>Eukaryota</taxon>
        <taxon>Metazoa</taxon>
        <taxon>Ecdysozoa</taxon>
        <taxon>Nematoda</taxon>
        <taxon>Chromadorea</taxon>
        <taxon>Rhabditida</taxon>
        <taxon>Rhabditina</taxon>
        <taxon>Rhabditomorpha</taxon>
        <taxon>Rhabditoidea</taxon>
        <taxon>Rhabditidae</taxon>
        <taxon>Peloderinae</taxon>
        <taxon>Caenorhabditis</taxon>
    </lineage>
</organism>
<comment type="function">
    <text evidence="1">Core subunit of the mitochondrial membrane respiratory chain NADH dehydrogenase (Complex I) that is believed to belong to the minimal assembly required for catalysis. Complex I functions in the transfer of electrons from NADH to the respiratory chain. The immediate electron acceptor for the enzyme is believed to be ubiquinone (By similarity).</text>
</comment>
<comment type="catalytic activity">
    <reaction>
        <text>a ubiquinone + NADH + 5 H(+)(in) = a ubiquinol + NAD(+) + 4 H(+)(out)</text>
        <dbReference type="Rhea" id="RHEA:29091"/>
        <dbReference type="Rhea" id="RHEA-COMP:9565"/>
        <dbReference type="Rhea" id="RHEA-COMP:9566"/>
        <dbReference type="ChEBI" id="CHEBI:15378"/>
        <dbReference type="ChEBI" id="CHEBI:16389"/>
        <dbReference type="ChEBI" id="CHEBI:17976"/>
        <dbReference type="ChEBI" id="CHEBI:57540"/>
        <dbReference type="ChEBI" id="CHEBI:57945"/>
        <dbReference type="EC" id="7.1.1.2"/>
    </reaction>
</comment>
<comment type="cofactor">
    <cofactor evidence="3">
        <name>[4Fe-4S] cluster</name>
        <dbReference type="ChEBI" id="CHEBI:49883"/>
    </cofactor>
    <text evidence="3">Binds 1 [4Fe-4S] cluster.</text>
</comment>
<comment type="subunit">
    <text evidence="1">Complex I is composed of 45 different subunits This is a component of the iron-sulfur (IP) fragment of the enzyme.</text>
</comment>
<comment type="subcellular location">
    <subcellularLocation>
        <location evidence="1">Mitochondrion</location>
    </subcellularLocation>
</comment>
<comment type="similarity">
    <text evidence="3">Belongs to the complex I 20 kDa subunit family.</text>
</comment>
<accession>Q94360</accession>
<reference key="1">
    <citation type="journal article" date="1998" name="Science">
        <title>Genome sequence of the nematode C. elegans: a platform for investigating biology.</title>
        <authorList>
            <consortium name="The C. elegans sequencing consortium"/>
        </authorList>
    </citation>
    <scope>NUCLEOTIDE SEQUENCE [LARGE SCALE GENOMIC DNA]</scope>
    <source>
        <strain>Bristol N2</strain>
    </source>
</reference>
<reference key="2">
    <citation type="journal article" date="2003" name="Biochim. Biophys. Acta">
        <title>The role of mitochondria in the life of the nematode, Caenorhabditis elegans.</title>
        <authorList>
            <person name="Tsang W.Y."/>
            <person name="Lemire B.D."/>
        </authorList>
    </citation>
    <scope>IDENTIFICATION</scope>
</reference>